<reference key="1">
    <citation type="submission" date="2006-02" db="EMBL/GenBank/DDBJ databases">
        <title>Complete sequence of chromosome of Jannaschia sp. CCS1.</title>
        <authorList>
            <consortium name="US DOE Joint Genome Institute"/>
            <person name="Copeland A."/>
            <person name="Lucas S."/>
            <person name="Lapidus A."/>
            <person name="Barry K."/>
            <person name="Detter J.C."/>
            <person name="Glavina del Rio T."/>
            <person name="Hammon N."/>
            <person name="Israni S."/>
            <person name="Pitluck S."/>
            <person name="Brettin T."/>
            <person name="Bruce D."/>
            <person name="Han C."/>
            <person name="Tapia R."/>
            <person name="Gilna P."/>
            <person name="Chertkov O."/>
            <person name="Saunders E."/>
            <person name="Schmutz J."/>
            <person name="Larimer F."/>
            <person name="Land M."/>
            <person name="Kyrpides N."/>
            <person name="Lykidis A."/>
            <person name="Moran M.A."/>
            <person name="Belas R."/>
            <person name="Ye W."/>
            <person name="Buchan A."/>
            <person name="Gonzalez J.M."/>
            <person name="Schell M.A."/>
            <person name="Richardson P."/>
        </authorList>
    </citation>
    <scope>NUCLEOTIDE SEQUENCE [LARGE SCALE GENOMIC DNA]</scope>
    <source>
        <strain>CCS1</strain>
    </source>
</reference>
<accession>Q28L59</accession>
<organism>
    <name type="scientific">Jannaschia sp. (strain CCS1)</name>
    <dbReference type="NCBI Taxonomy" id="290400"/>
    <lineage>
        <taxon>Bacteria</taxon>
        <taxon>Pseudomonadati</taxon>
        <taxon>Pseudomonadota</taxon>
        <taxon>Alphaproteobacteria</taxon>
        <taxon>Rhodobacterales</taxon>
        <taxon>Roseobacteraceae</taxon>
        <taxon>Jannaschia</taxon>
    </lineage>
</organism>
<name>SYE2_JANSC</name>
<sequence>MSAPMSASTSVVTRFAPSPTGFLHVGNLRTALFNFLIAKKAGGEFILRLDDTDPERSTQAFADAIQEDMEWLGLTWDRIERQSDRFDRYAAAADELRAKNRFYEAWETPTELDLKRKKQLNMHQPPVYDRAALALTDDQKEALRAERGQGVWRFKLDHQRIEWTDGILGDLSIDAASVSDPVLIRADGQVLYTIASVVDDTDMGVTHVVRGSDHVTNTATQIQIMEALGKSAPSFAHHSLLTGPQGEALSKRLGTLALRDLREAGMEPMALLSHMARIGSSQPVELAGSVEELAEGFDLNHFGSAPTKFDVEDLWPLTASVLHGTAFEDVAGEIAALGVPADIAPAFWEVARANIGKRAEIADWWALFRDGATPLVADEDREFVAQAFAMLPDLPYDETTWSNWTSAVKEATGRKGKGLFMPLRKAVTGRERGPEMADVMRLMQVKPTL</sequence>
<protein>
    <recommendedName>
        <fullName evidence="1">Glutamate--tRNA ligase 2</fullName>
        <ecNumber evidence="1">6.1.1.17</ecNumber>
    </recommendedName>
    <alternativeName>
        <fullName evidence="1">Glutamyl-tRNA synthetase 2</fullName>
        <shortName evidence="1">GluRS 2</shortName>
    </alternativeName>
</protein>
<gene>
    <name evidence="1" type="primary">gltX2</name>
    <name type="ordered locus">Jann_3636</name>
</gene>
<keyword id="KW-0030">Aminoacyl-tRNA synthetase</keyword>
<keyword id="KW-0067">ATP-binding</keyword>
<keyword id="KW-0963">Cytoplasm</keyword>
<keyword id="KW-0436">Ligase</keyword>
<keyword id="KW-0547">Nucleotide-binding</keyword>
<keyword id="KW-0648">Protein biosynthesis</keyword>
<keyword id="KW-1185">Reference proteome</keyword>
<feature type="chain" id="PRO_0000367693" description="Glutamate--tRNA ligase 2">
    <location>
        <begin position="1"/>
        <end position="449"/>
    </location>
</feature>
<feature type="short sequence motif" description="'HIGH' region" evidence="1">
    <location>
        <begin position="17"/>
        <end position="27"/>
    </location>
</feature>
<feature type="short sequence motif" description="'KMSKS' region" evidence="1">
    <location>
        <begin position="248"/>
        <end position="252"/>
    </location>
</feature>
<feature type="binding site" evidence="1">
    <location>
        <position position="251"/>
    </location>
    <ligand>
        <name>ATP</name>
        <dbReference type="ChEBI" id="CHEBI:30616"/>
    </ligand>
</feature>
<evidence type="ECO:0000255" key="1">
    <source>
        <dbReference type="HAMAP-Rule" id="MF_00022"/>
    </source>
</evidence>
<comment type="function">
    <text evidence="1">Catalyzes the attachment of glutamate to tRNA(Glu) in a two-step reaction: glutamate is first activated by ATP to form Glu-AMP and then transferred to the acceptor end of tRNA(Glu).</text>
</comment>
<comment type="catalytic activity">
    <reaction evidence="1">
        <text>tRNA(Glu) + L-glutamate + ATP = L-glutamyl-tRNA(Glu) + AMP + diphosphate</text>
        <dbReference type="Rhea" id="RHEA:23540"/>
        <dbReference type="Rhea" id="RHEA-COMP:9663"/>
        <dbReference type="Rhea" id="RHEA-COMP:9680"/>
        <dbReference type="ChEBI" id="CHEBI:29985"/>
        <dbReference type="ChEBI" id="CHEBI:30616"/>
        <dbReference type="ChEBI" id="CHEBI:33019"/>
        <dbReference type="ChEBI" id="CHEBI:78442"/>
        <dbReference type="ChEBI" id="CHEBI:78520"/>
        <dbReference type="ChEBI" id="CHEBI:456215"/>
        <dbReference type="EC" id="6.1.1.17"/>
    </reaction>
</comment>
<comment type="subunit">
    <text evidence="1">Monomer.</text>
</comment>
<comment type="subcellular location">
    <subcellularLocation>
        <location evidence="1">Cytoplasm</location>
    </subcellularLocation>
</comment>
<comment type="similarity">
    <text evidence="1">Belongs to the class-I aminoacyl-tRNA synthetase family. Glutamate--tRNA ligase type 1 subfamily.</text>
</comment>
<proteinExistence type="inferred from homology"/>
<dbReference type="EC" id="6.1.1.17" evidence="1"/>
<dbReference type="EMBL" id="CP000264">
    <property type="protein sequence ID" value="ABD56553.1"/>
    <property type="molecule type" value="Genomic_DNA"/>
</dbReference>
<dbReference type="RefSeq" id="WP_011456753.1">
    <property type="nucleotide sequence ID" value="NC_007802.1"/>
</dbReference>
<dbReference type="SMR" id="Q28L59"/>
<dbReference type="STRING" id="290400.Jann_3636"/>
<dbReference type="KEGG" id="jan:Jann_3636"/>
<dbReference type="eggNOG" id="COG0008">
    <property type="taxonomic scope" value="Bacteria"/>
</dbReference>
<dbReference type="HOGENOM" id="CLU_015768_6_1_5"/>
<dbReference type="OrthoDB" id="9807503at2"/>
<dbReference type="Proteomes" id="UP000008326">
    <property type="component" value="Chromosome"/>
</dbReference>
<dbReference type="GO" id="GO:0005737">
    <property type="term" value="C:cytoplasm"/>
    <property type="evidence" value="ECO:0007669"/>
    <property type="project" value="UniProtKB-SubCell"/>
</dbReference>
<dbReference type="GO" id="GO:0005524">
    <property type="term" value="F:ATP binding"/>
    <property type="evidence" value="ECO:0007669"/>
    <property type="project" value="UniProtKB-UniRule"/>
</dbReference>
<dbReference type="GO" id="GO:0004818">
    <property type="term" value="F:glutamate-tRNA ligase activity"/>
    <property type="evidence" value="ECO:0007669"/>
    <property type="project" value="UniProtKB-UniRule"/>
</dbReference>
<dbReference type="GO" id="GO:0000049">
    <property type="term" value="F:tRNA binding"/>
    <property type="evidence" value="ECO:0007669"/>
    <property type="project" value="InterPro"/>
</dbReference>
<dbReference type="GO" id="GO:0006424">
    <property type="term" value="P:glutamyl-tRNA aminoacylation"/>
    <property type="evidence" value="ECO:0007669"/>
    <property type="project" value="UniProtKB-UniRule"/>
</dbReference>
<dbReference type="Gene3D" id="1.10.10.350">
    <property type="match status" value="1"/>
</dbReference>
<dbReference type="Gene3D" id="3.40.50.620">
    <property type="entry name" value="HUPs"/>
    <property type="match status" value="1"/>
</dbReference>
<dbReference type="HAMAP" id="MF_00022">
    <property type="entry name" value="Glu_tRNA_synth_type1"/>
    <property type="match status" value="1"/>
</dbReference>
<dbReference type="InterPro" id="IPR045462">
    <property type="entry name" value="aa-tRNA-synth_I_cd-bd"/>
</dbReference>
<dbReference type="InterPro" id="IPR020751">
    <property type="entry name" value="aa-tRNA-synth_I_codon-bd_sub2"/>
</dbReference>
<dbReference type="InterPro" id="IPR001412">
    <property type="entry name" value="aa-tRNA-synth_I_CS"/>
</dbReference>
<dbReference type="InterPro" id="IPR008925">
    <property type="entry name" value="aa_tRNA-synth_I_cd-bd_sf"/>
</dbReference>
<dbReference type="InterPro" id="IPR004527">
    <property type="entry name" value="Glu-tRNA-ligase_bac/mito"/>
</dbReference>
<dbReference type="InterPro" id="IPR000924">
    <property type="entry name" value="Glu/Gln-tRNA-synth"/>
</dbReference>
<dbReference type="InterPro" id="IPR020058">
    <property type="entry name" value="Glu/Gln-tRNA-synth_Ib_cat-dom"/>
</dbReference>
<dbReference type="InterPro" id="IPR049940">
    <property type="entry name" value="GluQ/Sye"/>
</dbReference>
<dbReference type="InterPro" id="IPR014729">
    <property type="entry name" value="Rossmann-like_a/b/a_fold"/>
</dbReference>
<dbReference type="NCBIfam" id="TIGR00464">
    <property type="entry name" value="gltX_bact"/>
    <property type="match status" value="1"/>
</dbReference>
<dbReference type="PANTHER" id="PTHR43311">
    <property type="entry name" value="GLUTAMATE--TRNA LIGASE"/>
    <property type="match status" value="1"/>
</dbReference>
<dbReference type="PANTHER" id="PTHR43311:SF2">
    <property type="entry name" value="GLUTAMATE--TRNA LIGASE, MITOCHONDRIAL-RELATED"/>
    <property type="match status" value="1"/>
</dbReference>
<dbReference type="Pfam" id="PF19269">
    <property type="entry name" value="Anticodon_2"/>
    <property type="match status" value="1"/>
</dbReference>
<dbReference type="Pfam" id="PF00749">
    <property type="entry name" value="tRNA-synt_1c"/>
    <property type="match status" value="1"/>
</dbReference>
<dbReference type="PRINTS" id="PR00987">
    <property type="entry name" value="TRNASYNTHGLU"/>
</dbReference>
<dbReference type="SUPFAM" id="SSF48163">
    <property type="entry name" value="An anticodon-binding domain of class I aminoacyl-tRNA synthetases"/>
    <property type="match status" value="1"/>
</dbReference>
<dbReference type="SUPFAM" id="SSF52374">
    <property type="entry name" value="Nucleotidylyl transferase"/>
    <property type="match status" value="1"/>
</dbReference>
<dbReference type="PROSITE" id="PS00178">
    <property type="entry name" value="AA_TRNA_LIGASE_I"/>
    <property type="match status" value="1"/>
</dbReference>